<gene>
    <name evidence="2" type="primary">ddl</name>
    <name type="ordered locus">P9301_14921</name>
</gene>
<accession>A3PEE0</accession>
<organism>
    <name type="scientific">Prochlorococcus marinus (strain MIT 9301)</name>
    <dbReference type="NCBI Taxonomy" id="167546"/>
    <lineage>
        <taxon>Bacteria</taxon>
        <taxon>Bacillati</taxon>
        <taxon>Cyanobacteriota</taxon>
        <taxon>Cyanophyceae</taxon>
        <taxon>Synechococcales</taxon>
        <taxon>Prochlorococcaceae</taxon>
        <taxon>Prochlorococcus</taxon>
    </lineage>
</organism>
<comment type="function">
    <text evidence="2">Cell wall formation.</text>
</comment>
<comment type="catalytic activity">
    <reaction evidence="2">
        <text>2 D-alanine + ATP = D-alanyl-D-alanine + ADP + phosphate + H(+)</text>
        <dbReference type="Rhea" id="RHEA:11224"/>
        <dbReference type="ChEBI" id="CHEBI:15378"/>
        <dbReference type="ChEBI" id="CHEBI:30616"/>
        <dbReference type="ChEBI" id="CHEBI:43474"/>
        <dbReference type="ChEBI" id="CHEBI:57416"/>
        <dbReference type="ChEBI" id="CHEBI:57822"/>
        <dbReference type="ChEBI" id="CHEBI:456216"/>
        <dbReference type="EC" id="6.3.2.4"/>
    </reaction>
</comment>
<comment type="cofactor">
    <cofactor evidence="1">
        <name>Mg(2+)</name>
        <dbReference type="ChEBI" id="CHEBI:18420"/>
    </cofactor>
    <cofactor evidence="1">
        <name>Mn(2+)</name>
        <dbReference type="ChEBI" id="CHEBI:29035"/>
    </cofactor>
    <text evidence="1">Binds 2 magnesium or manganese ions per subunit.</text>
</comment>
<comment type="pathway">
    <text evidence="2">Cell wall biogenesis; peptidoglycan biosynthesis.</text>
</comment>
<comment type="subcellular location">
    <subcellularLocation>
        <location evidence="2">Cytoplasm</location>
    </subcellularLocation>
</comment>
<comment type="similarity">
    <text evidence="2">Belongs to the D-alanine--D-alanine ligase family.</text>
</comment>
<dbReference type="EC" id="6.3.2.4" evidence="2"/>
<dbReference type="EMBL" id="CP000576">
    <property type="protein sequence ID" value="ABO18115.1"/>
    <property type="molecule type" value="Genomic_DNA"/>
</dbReference>
<dbReference type="RefSeq" id="WP_011863422.1">
    <property type="nucleotide sequence ID" value="NC_009091.1"/>
</dbReference>
<dbReference type="SMR" id="A3PEE0"/>
<dbReference type="STRING" id="167546.P9301_14921"/>
<dbReference type="KEGG" id="pmg:P9301_14921"/>
<dbReference type="eggNOG" id="COG1181">
    <property type="taxonomic scope" value="Bacteria"/>
</dbReference>
<dbReference type="HOGENOM" id="CLU_039268_0_0_3"/>
<dbReference type="OrthoDB" id="9813261at2"/>
<dbReference type="UniPathway" id="UPA00219"/>
<dbReference type="Proteomes" id="UP000001430">
    <property type="component" value="Chromosome"/>
</dbReference>
<dbReference type="GO" id="GO:0005829">
    <property type="term" value="C:cytosol"/>
    <property type="evidence" value="ECO:0007669"/>
    <property type="project" value="TreeGrafter"/>
</dbReference>
<dbReference type="GO" id="GO:0005524">
    <property type="term" value="F:ATP binding"/>
    <property type="evidence" value="ECO:0007669"/>
    <property type="project" value="UniProtKB-KW"/>
</dbReference>
<dbReference type="GO" id="GO:0008716">
    <property type="term" value="F:D-alanine-D-alanine ligase activity"/>
    <property type="evidence" value="ECO:0007669"/>
    <property type="project" value="UniProtKB-UniRule"/>
</dbReference>
<dbReference type="GO" id="GO:0046872">
    <property type="term" value="F:metal ion binding"/>
    <property type="evidence" value="ECO:0007669"/>
    <property type="project" value="UniProtKB-KW"/>
</dbReference>
<dbReference type="GO" id="GO:0071555">
    <property type="term" value="P:cell wall organization"/>
    <property type="evidence" value="ECO:0007669"/>
    <property type="project" value="UniProtKB-KW"/>
</dbReference>
<dbReference type="GO" id="GO:0009252">
    <property type="term" value="P:peptidoglycan biosynthetic process"/>
    <property type="evidence" value="ECO:0007669"/>
    <property type="project" value="UniProtKB-UniRule"/>
</dbReference>
<dbReference type="GO" id="GO:0008360">
    <property type="term" value="P:regulation of cell shape"/>
    <property type="evidence" value="ECO:0007669"/>
    <property type="project" value="UniProtKB-KW"/>
</dbReference>
<dbReference type="Gene3D" id="3.40.50.20">
    <property type="match status" value="1"/>
</dbReference>
<dbReference type="Gene3D" id="3.30.1490.20">
    <property type="entry name" value="ATP-grasp fold, A domain"/>
    <property type="match status" value="1"/>
</dbReference>
<dbReference type="Gene3D" id="3.30.470.20">
    <property type="entry name" value="ATP-grasp fold, B domain"/>
    <property type="match status" value="1"/>
</dbReference>
<dbReference type="HAMAP" id="MF_00047">
    <property type="entry name" value="Dala_Dala_lig"/>
    <property type="match status" value="1"/>
</dbReference>
<dbReference type="InterPro" id="IPR011761">
    <property type="entry name" value="ATP-grasp"/>
</dbReference>
<dbReference type="InterPro" id="IPR013815">
    <property type="entry name" value="ATP_grasp_subdomain_1"/>
</dbReference>
<dbReference type="InterPro" id="IPR000291">
    <property type="entry name" value="D-Ala_lig_Van_CS"/>
</dbReference>
<dbReference type="InterPro" id="IPR005905">
    <property type="entry name" value="D_ala_D_ala"/>
</dbReference>
<dbReference type="InterPro" id="IPR011095">
    <property type="entry name" value="Dala_Dala_lig_C"/>
</dbReference>
<dbReference type="InterPro" id="IPR011127">
    <property type="entry name" value="Dala_Dala_lig_N"/>
</dbReference>
<dbReference type="InterPro" id="IPR016185">
    <property type="entry name" value="PreATP-grasp_dom_sf"/>
</dbReference>
<dbReference type="NCBIfam" id="TIGR01205">
    <property type="entry name" value="D_ala_D_alaTIGR"/>
    <property type="match status" value="1"/>
</dbReference>
<dbReference type="NCBIfam" id="NF002528">
    <property type="entry name" value="PRK01966.1-4"/>
    <property type="match status" value="1"/>
</dbReference>
<dbReference type="PANTHER" id="PTHR23132">
    <property type="entry name" value="D-ALANINE--D-ALANINE LIGASE"/>
    <property type="match status" value="1"/>
</dbReference>
<dbReference type="PANTHER" id="PTHR23132:SF25">
    <property type="entry name" value="D-ALANINE--D-ALANINE LIGASE A"/>
    <property type="match status" value="1"/>
</dbReference>
<dbReference type="Pfam" id="PF07478">
    <property type="entry name" value="Dala_Dala_lig_C"/>
    <property type="match status" value="1"/>
</dbReference>
<dbReference type="Pfam" id="PF01820">
    <property type="entry name" value="Dala_Dala_lig_N"/>
    <property type="match status" value="1"/>
</dbReference>
<dbReference type="PIRSF" id="PIRSF039102">
    <property type="entry name" value="Ddl/VanB"/>
    <property type="match status" value="1"/>
</dbReference>
<dbReference type="SUPFAM" id="SSF56059">
    <property type="entry name" value="Glutathione synthetase ATP-binding domain-like"/>
    <property type="match status" value="1"/>
</dbReference>
<dbReference type="SUPFAM" id="SSF52440">
    <property type="entry name" value="PreATP-grasp domain"/>
    <property type="match status" value="1"/>
</dbReference>
<dbReference type="PROSITE" id="PS50975">
    <property type="entry name" value="ATP_GRASP"/>
    <property type="match status" value="1"/>
</dbReference>
<dbReference type="PROSITE" id="PS00843">
    <property type="entry name" value="DALA_DALA_LIGASE_1"/>
    <property type="match status" value="1"/>
</dbReference>
<dbReference type="PROSITE" id="PS00844">
    <property type="entry name" value="DALA_DALA_LIGASE_2"/>
    <property type="match status" value="1"/>
</dbReference>
<feature type="chain" id="PRO_1000030478" description="D-alanine--D-alanine ligase">
    <location>
        <begin position="1"/>
        <end position="355"/>
    </location>
</feature>
<feature type="domain" description="ATP-grasp" evidence="2">
    <location>
        <begin position="143"/>
        <end position="350"/>
    </location>
</feature>
<feature type="binding site" evidence="2">
    <location>
        <begin position="178"/>
        <end position="233"/>
    </location>
    <ligand>
        <name>ATP</name>
        <dbReference type="ChEBI" id="CHEBI:30616"/>
    </ligand>
</feature>
<feature type="binding site" evidence="2">
    <location>
        <position position="303"/>
    </location>
    <ligand>
        <name>Mg(2+)</name>
        <dbReference type="ChEBI" id="CHEBI:18420"/>
        <label>1</label>
    </ligand>
</feature>
<feature type="binding site" evidence="2">
    <location>
        <position position="317"/>
    </location>
    <ligand>
        <name>Mg(2+)</name>
        <dbReference type="ChEBI" id="CHEBI:18420"/>
        <label>1</label>
    </ligand>
</feature>
<feature type="binding site" evidence="2">
    <location>
        <position position="317"/>
    </location>
    <ligand>
        <name>Mg(2+)</name>
        <dbReference type="ChEBI" id="CHEBI:18420"/>
        <label>2</label>
    </ligand>
</feature>
<feature type="binding site" evidence="2">
    <location>
        <position position="319"/>
    </location>
    <ligand>
        <name>Mg(2+)</name>
        <dbReference type="ChEBI" id="CHEBI:18420"/>
        <label>2</label>
    </ligand>
</feature>
<protein>
    <recommendedName>
        <fullName evidence="2">D-alanine--D-alanine ligase</fullName>
        <ecNumber evidence="2">6.3.2.4</ecNumber>
    </recommendedName>
    <alternativeName>
        <fullName evidence="2">D-Ala-D-Ala ligase</fullName>
    </alternativeName>
    <alternativeName>
        <fullName evidence="2">D-alanylalanine synthetase</fullName>
    </alternativeName>
</protein>
<proteinExistence type="inferred from homology"/>
<evidence type="ECO:0000250" key="1"/>
<evidence type="ECO:0000255" key="2">
    <source>
        <dbReference type="HAMAP-Rule" id="MF_00047"/>
    </source>
</evidence>
<keyword id="KW-0067">ATP-binding</keyword>
<keyword id="KW-0133">Cell shape</keyword>
<keyword id="KW-0961">Cell wall biogenesis/degradation</keyword>
<keyword id="KW-0963">Cytoplasm</keyword>
<keyword id="KW-0436">Ligase</keyword>
<keyword id="KW-0460">Magnesium</keyword>
<keyword id="KW-0464">Manganese</keyword>
<keyword id="KW-0479">Metal-binding</keyword>
<keyword id="KW-0547">Nucleotide-binding</keyword>
<keyword id="KW-0573">Peptidoglycan synthesis</keyword>
<keyword id="KW-1185">Reference proteome</keyword>
<reference key="1">
    <citation type="journal article" date="2007" name="PLoS Genet.">
        <title>Patterns and implications of gene gain and loss in the evolution of Prochlorococcus.</title>
        <authorList>
            <person name="Kettler G.C."/>
            <person name="Martiny A.C."/>
            <person name="Huang K."/>
            <person name="Zucker J."/>
            <person name="Coleman M.L."/>
            <person name="Rodrigue S."/>
            <person name="Chen F."/>
            <person name="Lapidus A."/>
            <person name="Ferriera S."/>
            <person name="Johnson J."/>
            <person name="Steglich C."/>
            <person name="Church G.M."/>
            <person name="Richardson P."/>
            <person name="Chisholm S.W."/>
        </authorList>
    </citation>
    <scope>NUCLEOTIDE SEQUENCE [LARGE SCALE GENOMIC DNA]</scope>
    <source>
        <strain>MIT 9301</strain>
    </source>
</reference>
<name>DDL_PROM0</name>
<sequence length="355" mass="40279">MIGEKKKCIGLIFGGHSNEHEVSISSAKTVFKAFKAQINRERFTVKAFYINKYGDWLDSDISEKILTGEIENYKTKKQEIFNQEKINFLDGIEFQNIDVWFPLLHGFNGEDGSIHGLIRFTKKPLVGCGIIGSALGMDKILMKTIFSNHKLPQVNYLVFQNEDLNDKQVKNKIINEILKKLKFPVFVKPSNSGSSLGISKVKNESEILLALEKAWGIDPRILIEEGLEVREIECGIIGNSKLITSEIGEVNYESDWYDYDSKYHSNNKIIIPAEIDSKITNEIKEIAIKSCRALNIFGFARVDFFLEKSSNKILLNEINTIPGFTKNSMFPMLWEASGLKIEQLVAKLVDISLDL</sequence>